<proteinExistence type="inferred from homology"/>
<accession>B2TUR7</accession>
<name>TNAA_SHIB3</name>
<dbReference type="EC" id="4.1.99.1" evidence="1"/>
<dbReference type="EMBL" id="CP001063">
    <property type="protein sequence ID" value="ACD07477.1"/>
    <property type="molecule type" value="Genomic_DNA"/>
</dbReference>
<dbReference type="RefSeq" id="WP_005025583.1">
    <property type="nucleotide sequence ID" value="NC_010658.1"/>
</dbReference>
<dbReference type="SMR" id="B2TUR7"/>
<dbReference type="STRING" id="344609.SbBS512_E4214"/>
<dbReference type="KEGG" id="sbc:SbBS512_E4214"/>
<dbReference type="HOGENOM" id="CLU_047223_0_0_6"/>
<dbReference type="UniPathway" id="UPA00332">
    <property type="reaction ID" value="UER00452"/>
</dbReference>
<dbReference type="Proteomes" id="UP000001030">
    <property type="component" value="Chromosome"/>
</dbReference>
<dbReference type="GO" id="GO:0009034">
    <property type="term" value="F:tryptophanase activity"/>
    <property type="evidence" value="ECO:0007669"/>
    <property type="project" value="UniProtKB-UniRule"/>
</dbReference>
<dbReference type="FunFam" id="3.40.640.10:FF:000039">
    <property type="entry name" value="Tryptophanase"/>
    <property type="match status" value="1"/>
</dbReference>
<dbReference type="Gene3D" id="3.90.1150.10">
    <property type="entry name" value="Aspartate Aminotransferase, domain 1"/>
    <property type="match status" value="1"/>
</dbReference>
<dbReference type="Gene3D" id="3.40.640.10">
    <property type="entry name" value="Type I PLP-dependent aspartate aminotransferase-like (Major domain)"/>
    <property type="match status" value="1"/>
</dbReference>
<dbReference type="HAMAP" id="MF_00544">
    <property type="entry name" value="Tryptophanase"/>
    <property type="match status" value="1"/>
</dbReference>
<dbReference type="InterPro" id="IPR001597">
    <property type="entry name" value="ArAA_b-elim_lyase/Thr_aldolase"/>
</dbReference>
<dbReference type="InterPro" id="IPR011166">
    <property type="entry name" value="Beta-eliminating_lyase"/>
</dbReference>
<dbReference type="InterPro" id="IPR015424">
    <property type="entry name" value="PyrdxlP-dep_Trfase"/>
</dbReference>
<dbReference type="InterPro" id="IPR015421">
    <property type="entry name" value="PyrdxlP-dep_Trfase_major"/>
</dbReference>
<dbReference type="InterPro" id="IPR015422">
    <property type="entry name" value="PyrdxlP-dep_Trfase_small"/>
</dbReference>
<dbReference type="InterPro" id="IPR013440">
    <property type="entry name" value="TNase"/>
</dbReference>
<dbReference type="InterPro" id="IPR018176">
    <property type="entry name" value="Tryptophanase_CS"/>
</dbReference>
<dbReference type="NCBIfam" id="NF009709">
    <property type="entry name" value="PRK13238.1"/>
    <property type="match status" value="1"/>
</dbReference>
<dbReference type="NCBIfam" id="TIGR02617">
    <property type="entry name" value="tnaA_trp_ase"/>
    <property type="match status" value="1"/>
</dbReference>
<dbReference type="PANTHER" id="PTHR32325">
    <property type="entry name" value="BETA-ELIMINATING LYASE-LIKE PROTEIN-RELATED"/>
    <property type="match status" value="1"/>
</dbReference>
<dbReference type="PANTHER" id="PTHR32325:SF4">
    <property type="entry name" value="TRYPTOPHANASE"/>
    <property type="match status" value="1"/>
</dbReference>
<dbReference type="Pfam" id="PF01212">
    <property type="entry name" value="Beta_elim_lyase"/>
    <property type="match status" value="1"/>
</dbReference>
<dbReference type="PIRSF" id="PIRSF001386">
    <property type="entry name" value="Trpase"/>
    <property type="match status" value="1"/>
</dbReference>
<dbReference type="SUPFAM" id="SSF53383">
    <property type="entry name" value="PLP-dependent transferases"/>
    <property type="match status" value="1"/>
</dbReference>
<dbReference type="PROSITE" id="PS00853">
    <property type="entry name" value="BETA_ELIM_LYASE"/>
    <property type="match status" value="1"/>
</dbReference>
<reference key="1">
    <citation type="submission" date="2008-05" db="EMBL/GenBank/DDBJ databases">
        <title>Complete sequence of Shigella boydii serotype 18 strain BS512.</title>
        <authorList>
            <person name="Rasko D.A."/>
            <person name="Rosovitz M."/>
            <person name="Maurelli A.T."/>
            <person name="Myers G."/>
            <person name="Seshadri R."/>
            <person name="Cer R."/>
            <person name="Jiang L."/>
            <person name="Ravel J."/>
            <person name="Sebastian Y."/>
        </authorList>
    </citation>
    <scope>NUCLEOTIDE SEQUENCE [LARGE SCALE GENOMIC DNA]</scope>
    <source>
        <strain>CDC 3083-94 / BS512</strain>
    </source>
</reference>
<keyword id="KW-0007">Acetylation</keyword>
<keyword id="KW-0456">Lyase</keyword>
<keyword id="KW-0663">Pyridoxal phosphate</keyword>
<keyword id="KW-1185">Reference proteome</keyword>
<keyword id="KW-0823">Tryptophan catabolism</keyword>
<comment type="catalytic activity">
    <reaction evidence="1">
        <text>L-tryptophan + H2O = indole + pyruvate + NH4(+)</text>
        <dbReference type="Rhea" id="RHEA:19553"/>
        <dbReference type="ChEBI" id="CHEBI:15361"/>
        <dbReference type="ChEBI" id="CHEBI:15377"/>
        <dbReference type="ChEBI" id="CHEBI:16881"/>
        <dbReference type="ChEBI" id="CHEBI:28938"/>
        <dbReference type="ChEBI" id="CHEBI:57912"/>
        <dbReference type="EC" id="4.1.99.1"/>
    </reaction>
</comment>
<comment type="cofactor">
    <cofactor evidence="1">
        <name>pyridoxal 5'-phosphate</name>
        <dbReference type="ChEBI" id="CHEBI:597326"/>
    </cofactor>
</comment>
<comment type="pathway">
    <text evidence="1">Amino-acid degradation; L-tryptophan degradation via pyruvate pathway; indole and pyruvate from L-tryptophan: step 1/1.</text>
</comment>
<comment type="subunit">
    <text evidence="1">Homotetramer.</text>
</comment>
<comment type="similarity">
    <text evidence="1">Belongs to the beta-eliminating lyase family.</text>
</comment>
<organism>
    <name type="scientific">Shigella boydii serotype 18 (strain CDC 3083-94 / BS512)</name>
    <dbReference type="NCBI Taxonomy" id="344609"/>
    <lineage>
        <taxon>Bacteria</taxon>
        <taxon>Pseudomonadati</taxon>
        <taxon>Pseudomonadota</taxon>
        <taxon>Gammaproteobacteria</taxon>
        <taxon>Enterobacterales</taxon>
        <taxon>Enterobacteriaceae</taxon>
        <taxon>Shigella</taxon>
    </lineage>
</organism>
<sequence length="471" mass="52843">MENFKHLPEPFRIRVIEPVKRTTRAYREEAIIKSGMNPFLLDREDVFIDLLTDSGTGAVTQSMQAAMMRGDEAYSGSRSYYALAESVKNIFGYQYTIPTHQGRGAEQIYIPVLIKKREQEKGLDRSKMVAFSNYFFDTTQGHSQINGCTVRNVYIKEAFDTGVRYDFKGNFDLEGLERGIEEVGPNNVPYIVATITSNSAGGQPVSLANLKAMYSIAKKYDIPVVMDSARFAENAYFIKQREAEYKDWTIEQITRETYKYADMLAMSAKKDAMVPMGGLLCMKDDSFFDVYTECRTLCVVQEGFPTYGGLEGGAMERLAVGLYDGMNLDWLAYRIAQVQYLVDGLEEIGVVCQQAGGHAAFVDAGKLLPHIPADQFPAQALACELYKVAGIRAVEIGSFLLGRDPKTGKQLPCPAELLRLTIPRATYTQTHMDFIIEAFKHVKENAANIKGLTFTYEPKVLRHFTAKLKEV</sequence>
<evidence type="ECO:0000255" key="1">
    <source>
        <dbReference type="HAMAP-Rule" id="MF_00544"/>
    </source>
</evidence>
<feature type="chain" id="PRO_1000128917" description="Tryptophanase">
    <location>
        <begin position="1"/>
        <end position="471"/>
    </location>
</feature>
<feature type="modified residue" description="N6-acetyllysine" evidence="1">
    <location>
        <position position="5"/>
    </location>
</feature>
<feature type="modified residue" description="N6-acetyllysine" evidence="1">
    <location>
        <position position="115"/>
    </location>
</feature>
<feature type="modified residue" description="N6-acetyllysine" evidence="1">
    <location>
        <position position="156"/>
    </location>
</feature>
<feature type="modified residue" description="N6-(pyridoxal phosphate)lysine" evidence="1">
    <location>
        <position position="270"/>
    </location>
</feature>
<feature type="modified residue" description="N6-acetyllysine" evidence="1">
    <location>
        <position position="450"/>
    </location>
</feature>
<gene>
    <name evidence="1" type="primary">tnaA</name>
    <name type="ordered locus">SbBS512_E4214</name>
</gene>
<protein>
    <recommendedName>
        <fullName evidence="1">Tryptophanase</fullName>
        <ecNumber evidence="1">4.1.99.1</ecNumber>
    </recommendedName>
    <alternativeName>
        <fullName evidence="1">L-tryptophan indole-lyase</fullName>
        <shortName evidence="1">TNase</shortName>
    </alternativeName>
</protein>